<accession>Q6A780</accession>
<reference key="1">
    <citation type="journal article" date="2004" name="Science">
        <title>The complete genome sequence of Propionibacterium acnes, a commensal of human skin.</title>
        <authorList>
            <person name="Brueggemann H."/>
            <person name="Henne A."/>
            <person name="Hoster F."/>
            <person name="Liesegang H."/>
            <person name="Wiezer A."/>
            <person name="Strittmatter A."/>
            <person name="Hujer S."/>
            <person name="Duerre P."/>
            <person name="Gottschalk G."/>
        </authorList>
    </citation>
    <scope>NUCLEOTIDE SEQUENCE [LARGE SCALE GENOMIC DNA]</scope>
    <source>
        <strain>DSM 16379 / KPA171202</strain>
    </source>
</reference>
<keyword id="KW-0963">Cytoplasm</keyword>
<keyword id="KW-0227">DNA damage</keyword>
<keyword id="KW-0234">DNA repair</keyword>
<keyword id="KW-0235">DNA replication</keyword>
<keyword id="KW-0239">DNA-directed DNA polymerase</keyword>
<keyword id="KW-0548">Nucleotidyltransferase</keyword>
<keyword id="KW-0808">Transferase</keyword>
<name>DNAE2_CUTAK</name>
<gene>
    <name evidence="1" type="primary">dnaE2</name>
    <name type="ordered locus">PPA1650</name>
</gene>
<evidence type="ECO:0000255" key="1">
    <source>
        <dbReference type="HAMAP-Rule" id="MF_01902"/>
    </source>
</evidence>
<evidence type="ECO:0000256" key="2">
    <source>
        <dbReference type="SAM" id="MobiDB-lite"/>
    </source>
</evidence>
<sequence length="1134" mass="124661">MSYHNPPIPWRELEGRISGRPAPHGHQESHADQVGYRHVRKPFDRHPVRPEGPVVPYAELHCHSSYSFLDGASNPEDLVIRAVELGLSGLALTDHDGLYGVVRMAEAAEACGLSTIIGSELSIGVPEPQNGVADPVGSHLLVLANGPEGYRRLAEALTDAYLVEGGRKGRPVHDLDHLAEVADGHWTVLTGCRKGAVRQGLVKGMLQAEAELRRLVDLFGIDNVLVELTDHRAPTDSRDNDLLAELASRHSLLTVATTAAHYAGAEQFELACALSAVRARRSLDEMDGWLPPGPVARLRSGAEMADLFSRHRDAVDNTVAVAERTAFHLKSVRPRLPDQKVPDGHTPISWLRHLVEEGRRACYGDDPVAKDRLATELDLIEDRGFAGYFLIVSDIVEFAQSQGILCQGRGSAAASAVCYVLGITVVDPVFYGLPFERFLSVLREEEPDIDVDFDARRREEVIQYVYAKYGRRNAAQVADVITYRPRSAVRDMAKALGYSQGQQDAWSRQMERRSVPPLPHDPDGPEIPDDVTTLAQQVMGLPRHLGIHSAGMVLTREPVGRICPIEPARMFGRTVLQWDKEDCAWMGLVKFDLLGLGMLSALSISFDLISQHCGRFWTLASIPRNEPGVYDMLCRGDSIGVFQVESRAQIGALPRLKPRCFYDLAVEIGLIRPGPVQGGAVHPYIRRRTGVEPVTYPHPLLEPVLERTLGIPLFQEQLMQMATTVGNCTAADADLLRRAMGSKRGVERIDSLRTKLFEGMAANGIDDDTAQGIYARIESFANFGFAESHALSFAGLVYTSAWIKLHYPAVFLAALLRSQPMGFYSSATLVADARRHGVVTRRPDVARSSVGADLELLDACCEELGSEELETGIDECLHDHDESEIGAFDPNRDDGDHRRDTHFAVRLGLSDVSGINIETATRIVEERERESFASLDDLARRVDLSGEEVEALALAGAFDDLVGSRRGALWQIGQINGVAPGQLDVQVVTQPPLLPEPTQMELLGDDLRATGISTADHPVRQVRDALNRRGVVQVDRLDGVETRRRIEVAGVVTHRQRPGTAGGVTFLNLEDETGLLNVIVTPGAWRHYRRVARTSRALVVRGILERGDEGVMSLQADRLEALDLSVPTKSRDFR</sequence>
<dbReference type="EC" id="2.7.7.7" evidence="1"/>
<dbReference type="EMBL" id="AE017283">
    <property type="protein sequence ID" value="AAT83385.1"/>
    <property type="molecule type" value="Genomic_DNA"/>
</dbReference>
<dbReference type="SMR" id="Q6A780"/>
<dbReference type="EnsemblBacteria" id="AAT83385">
    <property type="protein sequence ID" value="AAT83385"/>
    <property type="gene ID" value="PPA1650"/>
</dbReference>
<dbReference type="KEGG" id="pac:PPA1650"/>
<dbReference type="eggNOG" id="COG0587">
    <property type="taxonomic scope" value="Bacteria"/>
</dbReference>
<dbReference type="HOGENOM" id="CLU_001600_4_0_11"/>
<dbReference type="Proteomes" id="UP000000603">
    <property type="component" value="Chromosome"/>
</dbReference>
<dbReference type="GO" id="GO:0005737">
    <property type="term" value="C:cytoplasm"/>
    <property type="evidence" value="ECO:0007669"/>
    <property type="project" value="UniProtKB-SubCell"/>
</dbReference>
<dbReference type="GO" id="GO:0008408">
    <property type="term" value="F:3'-5' exonuclease activity"/>
    <property type="evidence" value="ECO:0007669"/>
    <property type="project" value="InterPro"/>
</dbReference>
<dbReference type="GO" id="GO:0003887">
    <property type="term" value="F:DNA-directed DNA polymerase activity"/>
    <property type="evidence" value="ECO:0007669"/>
    <property type="project" value="UniProtKB-UniRule"/>
</dbReference>
<dbReference type="GO" id="GO:0003676">
    <property type="term" value="F:nucleic acid binding"/>
    <property type="evidence" value="ECO:0007669"/>
    <property type="project" value="InterPro"/>
</dbReference>
<dbReference type="GO" id="GO:0006281">
    <property type="term" value="P:DNA repair"/>
    <property type="evidence" value="ECO:0007669"/>
    <property type="project" value="UniProtKB-UniRule"/>
</dbReference>
<dbReference type="GO" id="GO:0006260">
    <property type="term" value="P:DNA replication"/>
    <property type="evidence" value="ECO:0007669"/>
    <property type="project" value="UniProtKB-KW"/>
</dbReference>
<dbReference type="CDD" id="cd04485">
    <property type="entry name" value="DnaE_OBF"/>
    <property type="match status" value="1"/>
</dbReference>
<dbReference type="Gene3D" id="1.10.150.870">
    <property type="match status" value="1"/>
</dbReference>
<dbReference type="Gene3D" id="3.20.20.140">
    <property type="entry name" value="Metal-dependent hydrolases"/>
    <property type="match status" value="1"/>
</dbReference>
<dbReference type="HAMAP" id="MF_01902">
    <property type="entry name" value="DNApol_error_prone"/>
    <property type="match status" value="1"/>
</dbReference>
<dbReference type="InterPro" id="IPR011708">
    <property type="entry name" value="DNA_pol3_alpha_NTPase_dom"/>
</dbReference>
<dbReference type="InterPro" id="IPR040982">
    <property type="entry name" value="DNA_pol3_finger"/>
</dbReference>
<dbReference type="InterPro" id="IPR023073">
    <property type="entry name" value="DnaE2"/>
</dbReference>
<dbReference type="InterPro" id="IPR004805">
    <property type="entry name" value="DnaE2/DnaE/PolC"/>
</dbReference>
<dbReference type="InterPro" id="IPR029460">
    <property type="entry name" value="DNAPol_HHH"/>
</dbReference>
<dbReference type="InterPro" id="IPR004365">
    <property type="entry name" value="NA-bd_OB_tRNA"/>
</dbReference>
<dbReference type="InterPro" id="IPR004013">
    <property type="entry name" value="PHP_dom"/>
</dbReference>
<dbReference type="InterPro" id="IPR003141">
    <property type="entry name" value="Pol/His_phosphatase_N"/>
</dbReference>
<dbReference type="InterPro" id="IPR016195">
    <property type="entry name" value="Pol/histidinol_Pase-like"/>
</dbReference>
<dbReference type="NCBIfam" id="TIGR00594">
    <property type="entry name" value="polc"/>
    <property type="match status" value="1"/>
</dbReference>
<dbReference type="NCBIfam" id="NF004225">
    <property type="entry name" value="PRK05672.1"/>
    <property type="match status" value="1"/>
</dbReference>
<dbReference type="PANTHER" id="PTHR32294">
    <property type="entry name" value="DNA POLYMERASE III SUBUNIT ALPHA"/>
    <property type="match status" value="1"/>
</dbReference>
<dbReference type="PANTHER" id="PTHR32294:SF4">
    <property type="entry name" value="ERROR-PRONE DNA POLYMERASE"/>
    <property type="match status" value="1"/>
</dbReference>
<dbReference type="Pfam" id="PF07733">
    <property type="entry name" value="DNA_pol3_alpha"/>
    <property type="match status" value="1"/>
</dbReference>
<dbReference type="Pfam" id="PF17657">
    <property type="entry name" value="DNA_pol3_finger"/>
    <property type="match status" value="1"/>
</dbReference>
<dbReference type="Pfam" id="PF14579">
    <property type="entry name" value="HHH_6"/>
    <property type="match status" value="1"/>
</dbReference>
<dbReference type="Pfam" id="PF02811">
    <property type="entry name" value="PHP"/>
    <property type="match status" value="1"/>
</dbReference>
<dbReference type="Pfam" id="PF01336">
    <property type="entry name" value="tRNA_anti-codon"/>
    <property type="match status" value="1"/>
</dbReference>
<dbReference type="SMART" id="SM00481">
    <property type="entry name" value="POLIIIAc"/>
    <property type="match status" value="1"/>
</dbReference>
<dbReference type="SUPFAM" id="SSF160975">
    <property type="entry name" value="AF1531-like"/>
    <property type="match status" value="1"/>
</dbReference>
<dbReference type="SUPFAM" id="SSF89550">
    <property type="entry name" value="PHP domain-like"/>
    <property type="match status" value="1"/>
</dbReference>
<comment type="function">
    <text evidence="1">DNA polymerase involved in damage-induced mutagenesis and translesion synthesis (TLS). It is not the major replicative DNA polymerase.</text>
</comment>
<comment type="catalytic activity">
    <reaction evidence="1">
        <text>DNA(n) + a 2'-deoxyribonucleoside 5'-triphosphate = DNA(n+1) + diphosphate</text>
        <dbReference type="Rhea" id="RHEA:22508"/>
        <dbReference type="Rhea" id="RHEA-COMP:17339"/>
        <dbReference type="Rhea" id="RHEA-COMP:17340"/>
        <dbReference type="ChEBI" id="CHEBI:33019"/>
        <dbReference type="ChEBI" id="CHEBI:61560"/>
        <dbReference type="ChEBI" id="CHEBI:173112"/>
        <dbReference type="EC" id="2.7.7.7"/>
    </reaction>
</comment>
<comment type="subcellular location">
    <subcellularLocation>
        <location evidence="1">Cytoplasm</location>
    </subcellularLocation>
</comment>
<comment type="similarity">
    <text evidence="1">Belongs to the DNA polymerase type-C family. DnaE2 subfamily.</text>
</comment>
<organism>
    <name type="scientific">Cutibacterium acnes (strain DSM 16379 / KPA171202)</name>
    <name type="common">Propionibacterium acnes</name>
    <dbReference type="NCBI Taxonomy" id="267747"/>
    <lineage>
        <taxon>Bacteria</taxon>
        <taxon>Bacillati</taxon>
        <taxon>Actinomycetota</taxon>
        <taxon>Actinomycetes</taxon>
        <taxon>Propionibacteriales</taxon>
        <taxon>Propionibacteriaceae</taxon>
        <taxon>Cutibacterium</taxon>
    </lineage>
</organism>
<protein>
    <recommendedName>
        <fullName evidence="1">Error-prone DNA polymerase</fullName>
        <ecNumber evidence="1">2.7.7.7</ecNumber>
    </recommendedName>
</protein>
<feature type="chain" id="PRO_0000103387" description="Error-prone DNA polymerase">
    <location>
        <begin position="1"/>
        <end position="1134"/>
    </location>
</feature>
<feature type="region of interest" description="Disordered" evidence="2">
    <location>
        <begin position="1"/>
        <end position="33"/>
    </location>
</feature>
<proteinExistence type="inferred from homology"/>